<keyword id="KW-0903">Direct protein sequencing</keyword>
<keyword id="KW-0378">Hydrolase</keyword>
<keyword id="KW-0479">Metal-binding</keyword>
<keyword id="KW-0482">Metalloprotease</keyword>
<keyword id="KW-0645">Protease</keyword>
<keyword id="KW-0964">Secreted</keyword>
<keyword id="KW-0800">Toxin</keyword>
<keyword id="KW-0862">Zinc</keyword>
<sequence length="15" mass="1689">SPXIIIDYLCVTETX</sequence>
<reference key="1">
    <citation type="journal article" date="2007" name="Comp. Biochem. Physiol.">
        <title>Proteomic analysis of the venom from the scorpion Tityus stigmurus: biochemical and physiological comparison with other Tityus species.</title>
        <authorList>
            <person name="Batista C.V.F."/>
            <person name="Roman-Gonzalez S.A."/>
            <person name="Salas-Castillo S.P."/>
            <person name="Zamudio F.Z."/>
            <person name="Gomez-Lagunas F."/>
            <person name="Possani L.D."/>
        </authorList>
    </citation>
    <scope>PROTEIN SEQUENCE</scope>
    <scope>MASS SPECTROMETRY</scope>
    <source>
        <tissue>Venom</tissue>
    </source>
</reference>
<feature type="chain" id="PRO_0000366112" description="Venom metalloproteinase">
    <location>
        <begin position="1"/>
        <end position="15" status="greater than"/>
    </location>
</feature>
<feature type="binding site" evidence="1">
    <location>
        <position position="7"/>
    </location>
    <ligand>
        <name>Ca(2+)</name>
        <dbReference type="ChEBI" id="CHEBI:29108"/>
        <label>1</label>
    </ligand>
</feature>
<feature type="non-terminal residue">
    <location>
        <position position="15"/>
    </location>
</feature>
<comment type="cofactor">
    <cofactor evidence="1">
        <name>Zn(2+)</name>
        <dbReference type="ChEBI" id="CHEBI:29105"/>
    </cofactor>
    <text evidence="1">Binds 1 zinc ion per subunit.</text>
</comment>
<comment type="subcellular location">
    <subcellularLocation>
        <location>Secreted</location>
    </subcellularLocation>
</comment>
<comment type="tissue specificity">
    <text>Expressed by the venom gland.</text>
</comment>
<comment type="mass spectrometry" mass="25367.0" method="Electrospray" evidence="2"/>
<comment type="similarity">
    <text evidence="3">Belongs to the venom metalloproteinase (M12B) family.</text>
</comment>
<evidence type="ECO:0000250" key="1"/>
<evidence type="ECO:0000269" key="2">
    <source>
    </source>
</evidence>
<evidence type="ECO:0000305" key="3"/>
<proteinExistence type="evidence at protein level"/>
<dbReference type="EC" id="3.4.24.-"/>
<dbReference type="GO" id="GO:0005576">
    <property type="term" value="C:extracellular region"/>
    <property type="evidence" value="ECO:0007669"/>
    <property type="project" value="UniProtKB-SubCell"/>
</dbReference>
<dbReference type="GO" id="GO:0046872">
    <property type="term" value="F:metal ion binding"/>
    <property type="evidence" value="ECO:0007669"/>
    <property type="project" value="UniProtKB-KW"/>
</dbReference>
<dbReference type="GO" id="GO:0008237">
    <property type="term" value="F:metallopeptidase activity"/>
    <property type="evidence" value="ECO:0007669"/>
    <property type="project" value="UniProtKB-KW"/>
</dbReference>
<dbReference type="GO" id="GO:0090729">
    <property type="term" value="F:toxin activity"/>
    <property type="evidence" value="ECO:0007669"/>
    <property type="project" value="UniProtKB-KW"/>
</dbReference>
<dbReference type="GO" id="GO:0006508">
    <property type="term" value="P:proteolysis"/>
    <property type="evidence" value="ECO:0007669"/>
    <property type="project" value="UniProtKB-KW"/>
</dbReference>
<protein>
    <recommendedName>
        <fullName>Venom metalloproteinase</fullName>
        <shortName>VMP</shortName>
        <ecNumber>3.4.24.-</ecNumber>
    </recommendedName>
</protein>
<accession>P0C8X4</accession>
<organism>
    <name type="scientific">Tityus stigmurus</name>
    <name type="common">Brazilian scorpion</name>
    <dbReference type="NCBI Taxonomy" id="50344"/>
    <lineage>
        <taxon>Eukaryota</taxon>
        <taxon>Metazoa</taxon>
        <taxon>Ecdysozoa</taxon>
        <taxon>Arthropoda</taxon>
        <taxon>Chelicerata</taxon>
        <taxon>Arachnida</taxon>
        <taxon>Scorpiones</taxon>
        <taxon>Buthida</taxon>
        <taxon>Buthoidea</taxon>
        <taxon>Buthidae</taxon>
        <taxon>Tityus</taxon>
    </lineage>
</organism>
<name>VMP_TITST</name>